<feature type="chain" id="PRO_1000130646" description="Nucleotide-binding protein YajQ">
    <location>
        <begin position="1"/>
        <end position="163"/>
    </location>
</feature>
<organism>
    <name type="scientific">Salmonella dublin (strain CT_02021853)</name>
    <dbReference type="NCBI Taxonomy" id="439851"/>
    <lineage>
        <taxon>Bacteria</taxon>
        <taxon>Pseudomonadati</taxon>
        <taxon>Pseudomonadota</taxon>
        <taxon>Gammaproteobacteria</taxon>
        <taxon>Enterobacterales</taxon>
        <taxon>Enterobacteriaceae</taxon>
        <taxon>Salmonella</taxon>
    </lineage>
</organism>
<comment type="function">
    <text evidence="1">Nucleotide-binding protein.</text>
</comment>
<comment type="similarity">
    <text evidence="1">Belongs to the YajQ family.</text>
</comment>
<proteinExistence type="inferred from homology"/>
<dbReference type="EMBL" id="CP001144">
    <property type="protein sequence ID" value="ACH74969.1"/>
    <property type="molecule type" value="Genomic_DNA"/>
</dbReference>
<dbReference type="RefSeq" id="WP_001138913.1">
    <property type="nucleotide sequence ID" value="NC_011205.1"/>
</dbReference>
<dbReference type="SMR" id="B5FKU0"/>
<dbReference type="KEGG" id="sed:SeD_A0476"/>
<dbReference type="HOGENOM" id="CLU_099839_1_0_6"/>
<dbReference type="Proteomes" id="UP000008322">
    <property type="component" value="Chromosome"/>
</dbReference>
<dbReference type="GO" id="GO:0005829">
    <property type="term" value="C:cytosol"/>
    <property type="evidence" value="ECO:0007669"/>
    <property type="project" value="TreeGrafter"/>
</dbReference>
<dbReference type="GO" id="GO:0000166">
    <property type="term" value="F:nucleotide binding"/>
    <property type="evidence" value="ECO:0007669"/>
    <property type="project" value="TreeGrafter"/>
</dbReference>
<dbReference type="CDD" id="cd11740">
    <property type="entry name" value="YajQ_like"/>
    <property type="match status" value="1"/>
</dbReference>
<dbReference type="FunFam" id="3.30.70.860:FF:000001">
    <property type="entry name" value="UPF0234 protein YajQ"/>
    <property type="match status" value="1"/>
</dbReference>
<dbReference type="FunFam" id="3.30.70.990:FF:000001">
    <property type="entry name" value="UPF0234 protein YajQ"/>
    <property type="match status" value="1"/>
</dbReference>
<dbReference type="Gene3D" id="3.30.70.860">
    <property type="match status" value="1"/>
</dbReference>
<dbReference type="Gene3D" id="3.30.70.990">
    <property type="entry name" value="YajQ-like, domain 2"/>
    <property type="match status" value="1"/>
</dbReference>
<dbReference type="HAMAP" id="MF_00632">
    <property type="entry name" value="YajQ"/>
    <property type="match status" value="1"/>
</dbReference>
<dbReference type="InterPro" id="IPR007551">
    <property type="entry name" value="DUF520"/>
</dbReference>
<dbReference type="InterPro" id="IPR035571">
    <property type="entry name" value="UPF0234-like_C"/>
</dbReference>
<dbReference type="InterPro" id="IPR035570">
    <property type="entry name" value="UPF0234_N"/>
</dbReference>
<dbReference type="InterPro" id="IPR036183">
    <property type="entry name" value="YajQ-like_sf"/>
</dbReference>
<dbReference type="NCBIfam" id="NF003819">
    <property type="entry name" value="PRK05412.1"/>
    <property type="match status" value="1"/>
</dbReference>
<dbReference type="PANTHER" id="PTHR30476">
    <property type="entry name" value="UPF0234 PROTEIN YAJQ"/>
    <property type="match status" value="1"/>
</dbReference>
<dbReference type="PANTHER" id="PTHR30476:SF0">
    <property type="entry name" value="UPF0234 PROTEIN YAJQ"/>
    <property type="match status" value="1"/>
</dbReference>
<dbReference type="Pfam" id="PF04461">
    <property type="entry name" value="DUF520"/>
    <property type="match status" value="1"/>
</dbReference>
<dbReference type="SUPFAM" id="SSF89963">
    <property type="entry name" value="YajQ-like"/>
    <property type="match status" value="2"/>
</dbReference>
<keyword id="KW-0547">Nucleotide-binding</keyword>
<protein>
    <recommendedName>
        <fullName evidence="1">Nucleotide-binding protein YajQ</fullName>
    </recommendedName>
</protein>
<sequence length="163" mass="18319">MPSFDIVSEVDLQEARNGVDNAVREVESRFDFRGVEATIELNDANKTIKVLSESDFQVNQLLDILRAKLLKRGIEGASLDVPDEFVHSGKTWYVEAKLKQGIESAVQKKIVKLIKDSKLKVQAQIQGEEIRVTGKSRDDLQSVMALVRGGDLGQPFQFKNFRD</sequence>
<reference key="1">
    <citation type="journal article" date="2011" name="J. Bacteriol.">
        <title>Comparative genomics of 28 Salmonella enterica isolates: evidence for CRISPR-mediated adaptive sublineage evolution.</title>
        <authorList>
            <person name="Fricke W.F."/>
            <person name="Mammel M.K."/>
            <person name="McDermott P.F."/>
            <person name="Tartera C."/>
            <person name="White D.G."/>
            <person name="Leclerc J.E."/>
            <person name="Ravel J."/>
            <person name="Cebula T.A."/>
        </authorList>
    </citation>
    <scope>NUCLEOTIDE SEQUENCE [LARGE SCALE GENOMIC DNA]</scope>
    <source>
        <strain>CT_02021853</strain>
    </source>
</reference>
<gene>
    <name evidence="1" type="primary">yajQ</name>
    <name type="ordered locus">SeD_A0476</name>
</gene>
<name>YAJQ_SALDC</name>
<evidence type="ECO:0000255" key="1">
    <source>
        <dbReference type="HAMAP-Rule" id="MF_00632"/>
    </source>
</evidence>
<accession>B5FKU0</accession>